<reference key="1">
    <citation type="submission" date="2005-06" db="EMBL/GenBank/DDBJ databases">
        <authorList>
            <consortium name="NIH - Zebrafish Gene Collection (ZGC) project"/>
        </authorList>
    </citation>
    <scope>NUCLEOTIDE SEQUENCE [LARGE SCALE MRNA]</scope>
    <source>
        <tissue>Brain</tissue>
    </source>
</reference>
<feature type="chain" id="PRO_0000329465" description="Germ cell-specific gene 1-like protein">
    <location>
        <begin position="1"/>
        <end position="304"/>
    </location>
</feature>
<feature type="topological domain" description="Cytoplasmic" evidence="2">
    <location>
        <begin position="1"/>
        <end position="8"/>
    </location>
</feature>
<feature type="transmembrane region" description="Helical" evidence="2">
    <location>
        <begin position="9"/>
        <end position="29"/>
    </location>
</feature>
<feature type="topological domain" description="Extracellular" evidence="2">
    <location>
        <begin position="30"/>
        <end position="112"/>
    </location>
</feature>
<feature type="transmembrane region" description="Helical" evidence="2">
    <location>
        <begin position="113"/>
        <end position="133"/>
    </location>
</feature>
<feature type="topological domain" description="Cytoplasmic" evidence="2">
    <location>
        <begin position="134"/>
        <end position="153"/>
    </location>
</feature>
<feature type="transmembrane region" description="Helical" evidence="2">
    <location>
        <begin position="154"/>
        <end position="174"/>
    </location>
</feature>
<feature type="topological domain" description="Extracellular" evidence="2">
    <location>
        <begin position="175"/>
        <end position="197"/>
    </location>
</feature>
<feature type="transmembrane region" description="Helical" evidence="2">
    <location>
        <begin position="198"/>
        <end position="218"/>
    </location>
</feature>
<feature type="topological domain" description="Cytoplasmic" evidence="2">
    <location>
        <begin position="219"/>
        <end position="304"/>
    </location>
</feature>
<feature type="region of interest" description="Disordered" evidence="3">
    <location>
        <begin position="266"/>
        <end position="304"/>
    </location>
</feature>
<feature type="compositionally biased region" description="Polar residues" evidence="3">
    <location>
        <begin position="266"/>
        <end position="278"/>
    </location>
</feature>
<protein>
    <recommendedName>
        <fullName>Germ cell-specific gene 1-like protein</fullName>
        <shortName>GSG1-like protein</shortName>
    </recommendedName>
</protein>
<gene>
    <name type="primary">gsg1l</name>
    <name type="ORF">zgc:114039</name>
</gene>
<proteinExistence type="evidence at transcript level"/>
<evidence type="ECO:0000250" key="1"/>
<evidence type="ECO:0000255" key="2"/>
<evidence type="ECO:0000256" key="3">
    <source>
        <dbReference type="SAM" id="MobiDB-lite"/>
    </source>
</evidence>
<evidence type="ECO:0000305" key="4"/>
<name>GSG1L_DANRE</name>
<comment type="function">
    <text evidence="1">As a component of the AMPAR complex, modifies AMPA receptor (AMPAR) gating.</text>
</comment>
<comment type="subunit">
    <text evidence="1">Component of the AMPAR complex.</text>
</comment>
<comment type="subcellular location">
    <subcellularLocation>
        <location evidence="1">Cell membrane</location>
        <topology evidence="1">Multi-pass membrane protein</topology>
    </subcellularLocation>
    <subcellularLocation>
        <location evidence="1">Synapse</location>
    </subcellularLocation>
</comment>
<comment type="similarity">
    <text evidence="4">Belongs to the GSG1 family.</text>
</comment>
<accession>Q4V922</accession>
<organism>
    <name type="scientific">Danio rerio</name>
    <name type="common">Zebrafish</name>
    <name type="synonym">Brachydanio rerio</name>
    <dbReference type="NCBI Taxonomy" id="7955"/>
    <lineage>
        <taxon>Eukaryota</taxon>
        <taxon>Metazoa</taxon>
        <taxon>Chordata</taxon>
        <taxon>Craniata</taxon>
        <taxon>Vertebrata</taxon>
        <taxon>Euteleostomi</taxon>
        <taxon>Actinopterygii</taxon>
        <taxon>Neopterygii</taxon>
        <taxon>Teleostei</taxon>
        <taxon>Ostariophysi</taxon>
        <taxon>Cypriniformes</taxon>
        <taxon>Danionidae</taxon>
        <taxon>Danioninae</taxon>
        <taxon>Danio</taxon>
    </lineage>
</organism>
<sequence>MKTTRKCRALLSVGLNLLALLFSTTAFITTYWCEGTQRVPKPNCSKDRRHNCIDYGVNETDPSKVHYSWETGDDRFLFRHFHTGIWYSCEENIHGGGEKCRSFIDLAPASERGVLWLSVVSEVLYIMLLVVGFSLMCLELFHSSNVIDGLKLNAFAAVFTVLSGLLGMVAHMMYTQVFQITVSLGPEDWRPHTWDYGWSFCMAWGSFTCCMAASVTTLNSYTKTVIEFRHKRKLFEQGLREEQTFLDPETFHYFRDRSVQSISSSVDVYPSHGSSHGNSRGKMRSPPAPVDQGDNTESLGEEQC</sequence>
<dbReference type="EMBL" id="BC097105">
    <property type="protein sequence ID" value="AAH97105.1"/>
    <property type="molecule type" value="mRNA"/>
</dbReference>
<dbReference type="RefSeq" id="NP_001035065.1">
    <property type="nucleotide sequence ID" value="NM_001039976.1"/>
</dbReference>
<dbReference type="SMR" id="Q4V922"/>
<dbReference type="FunCoup" id="Q4V922">
    <property type="interactions" value="1895"/>
</dbReference>
<dbReference type="STRING" id="7955.ENSDARP00000054407"/>
<dbReference type="PaxDb" id="7955-ENSDARP00000054407"/>
<dbReference type="Ensembl" id="ENSDART00000054408">
    <property type="protein sequence ID" value="ENSDARP00000054407"/>
    <property type="gene ID" value="ENSDARG00000037390"/>
</dbReference>
<dbReference type="GeneID" id="664746"/>
<dbReference type="KEGG" id="dre:664746"/>
<dbReference type="AGR" id="ZFIN:ZDB-GENE-050913-27"/>
<dbReference type="CTD" id="146395"/>
<dbReference type="ZFIN" id="ZDB-GENE-050913-27">
    <property type="gene designation" value="gsg1l"/>
</dbReference>
<dbReference type="eggNOG" id="ENOG502QRSH">
    <property type="taxonomic scope" value="Eukaryota"/>
</dbReference>
<dbReference type="HOGENOM" id="CLU_063057_0_0_1"/>
<dbReference type="InParanoid" id="Q4V922"/>
<dbReference type="OMA" id="FRLACRH"/>
<dbReference type="OrthoDB" id="10001768at2759"/>
<dbReference type="PhylomeDB" id="Q4V922"/>
<dbReference type="TreeFam" id="TF331388"/>
<dbReference type="PRO" id="PR:Q4V922"/>
<dbReference type="Proteomes" id="UP000000437">
    <property type="component" value="Chromosome 3"/>
</dbReference>
<dbReference type="Bgee" id="ENSDARG00000037390">
    <property type="expression patterns" value="Expressed in brain and 5 other cell types or tissues"/>
</dbReference>
<dbReference type="GO" id="GO:0005886">
    <property type="term" value="C:plasma membrane"/>
    <property type="evidence" value="ECO:0000318"/>
    <property type="project" value="GO_Central"/>
</dbReference>
<dbReference type="GO" id="GO:0045202">
    <property type="term" value="C:synapse"/>
    <property type="evidence" value="ECO:0007669"/>
    <property type="project" value="UniProtKB-SubCell"/>
</dbReference>
<dbReference type="FunFam" id="1.20.140.150:FF:000005">
    <property type="entry name" value="Germ cell-specific gene 1-like"/>
    <property type="match status" value="1"/>
</dbReference>
<dbReference type="Gene3D" id="1.20.140.150">
    <property type="match status" value="1"/>
</dbReference>
<dbReference type="InterPro" id="IPR012478">
    <property type="entry name" value="GSG-1"/>
</dbReference>
<dbReference type="InterPro" id="IPR050579">
    <property type="entry name" value="PMP-22/EMP/MP20-like"/>
</dbReference>
<dbReference type="PANTHER" id="PTHR10671">
    <property type="entry name" value="EPITHELIAL MEMBRANE PROTEIN-RELATED"/>
    <property type="match status" value="1"/>
</dbReference>
<dbReference type="PANTHER" id="PTHR10671:SF35">
    <property type="entry name" value="GERM CELL-SPECIFIC GENE 1-LIKE PROTEIN"/>
    <property type="match status" value="1"/>
</dbReference>
<dbReference type="Pfam" id="PF07803">
    <property type="entry name" value="GSG-1"/>
    <property type="match status" value="1"/>
</dbReference>
<keyword id="KW-1003">Cell membrane</keyword>
<keyword id="KW-0472">Membrane</keyword>
<keyword id="KW-1185">Reference proteome</keyword>
<keyword id="KW-0770">Synapse</keyword>
<keyword id="KW-0812">Transmembrane</keyword>
<keyword id="KW-1133">Transmembrane helix</keyword>